<protein>
    <recommendedName>
        <fullName>Insulin-like growth factor-binding protein-like 1</fullName>
    </recommendedName>
    <alternativeName>
        <fullName>IGFBP-related protein 10</fullName>
    </alternativeName>
    <alternativeName>
        <fullName>Insulin-like growth factor-binding-related protein 4</fullName>
        <shortName>IGFBP-rP4</shortName>
    </alternativeName>
</protein>
<evidence type="ECO:0000250" key="1"/>
<evidence type="ECO:0000255" key="2"/>
<evidence type="ECO:0000255" key="3">
    <source>
        <dbReference type="PROSITE-ProRule" id="PRU00114"/>
    </source>
</evidence>
<evidence type="ECO:0000255" key="4">
    <source>
        <dbReference type="PROSITE-ProRule" id="PRU00653"/>
    </source>
</evidence>
<evidence type="ECO:0000255" key="5">
    <source>
        <dbReference type="PROSITE-ProRule" id="PRU00798"/>
    </source>
</evidence>
<reference key="1">
    <citation type="journal article" date="2009" name="PLoS Biol.">
        <title>Lineage-specific biology revealed by a finished genome assembly of the mouse.</title>
        <authorList>
            <person name="Church D.M."/>
            <person name="Goodstadt L."/>
            <person name="Hillier L.W."/>
            <person name="Zody M.C."/>
            <person name="Goldstein S."/>
            <person name="She X."/>
            <person name="Bult C.J."/>
            <person name="Agarwala R."/>
            <person name="Cherry J.L."/>
            <person name="DiCuccio M."/>
            <person name="Hlavina W."/>
            <person name="Kapustin Y."/>
            <person name="Meric P."/>
            <person name="Maglott D."/>
            <person name="Birtle Z."/>
            <person name="Marques A.C."/>
            <person name="Graves T."/>
            <person name="Zhou S."/>
            <person name="Teague B."/>
            <person name="Potamousis K."/>
            <person name="Churas C."/>
            <person name="Place M."/>
            <person name="Herschleb J."/>
            <person name="Runnheim R."/>
            <person name="Forrest D."/>
            <person name="Amos-Landgraf J."/>
            <person name="Schwartz D.C."/>
            <person name="Cheng Z."/>
            <person name="Lindblad-Toh K."/>
            <person name="Eichler E.E."/>
            <person name="Ponting C.P."/>
        </authorList>
    </citation>
    <scope>NUCLEOTIDE SEQUENCE [LARGE SCALE GENOMIC DNA]</scope>
    <source>
        <strain>C57BL/6J</strain>
    </source>
</reference>
<reference key="2">
    <citation type="journal article" date="2004" name="Genome Res.">
        <title>The status, quality, and expansion of the NIH full-length cDNA project: the Mammalian Gene Collection (MGC).</title>
        <authorList>
            <consortium name="The MGC Project Team"/>
        </authorList>
    </citation>
    <scope>NUCLEOTIDE SEQUENCE [LARGE SCALE MRNA]</scope>
    <source>
        <strain>C57BL/6J</strain>
        <tissue>Brain</tissue>
    </source>
</reference>
<keyword id="KW-1015">Disulfide bond</keyword>
<keyword id="KW-0325">Glycoprotein</keyword>
<keyword id="KW-0393">Immunoglobulin domain</keyword>
<keyword id="KW-1185">Reference proteome</keyword>
<keyword id="KW-0964">Secreted</keyword>
<keyword id="KW-0732">Signal</keyword>
<feature type="signal peptide" evidence="2">
    <location>
        <begin position="1"/>
        <end position="17"/>
    </location>
</feature>
<feature type="chain" id="PRO_0000297688" description="Insulin-like growth factor-binding protein-like 1">
    <location>
        <begin position="18"/>
        <end position="270"/>
    </location>
</feature>
<feature type="domain" description="IGFBP N-terminal" evidence="4">
    <location>
        <begin position="26"/>
        <end position="101"/>
    </location>
</feature>
<feature type="domain" description="Kazal-like" evidence="5">
    <location>
        <begin position="87"/>
        <end position="145"/>
    </location>
</feature>
<feature type="domain" description="Ig-like C2-type">
    <location>
        <begin position="147"/>
        <end position="251"/>
    </location>
</feature>
<feature type="glycosylation site" description="N-linked (GlcNAc...) asparagine" evidence="2">
    <location>
        <position position="158"/>
    </location>
</feature>
<feature type="disulfide bond" evidence="4">
    <location>
        <begin position="30"/>
        <end position="55"/>
    </location>
</feature>
<feature type="disulfide bond" evidence="4">
    <location>
        <begin position="33"/>
        <end position="57"/>
    </location>
</feature>
<feature type="disulfide bond" evidence="4">
    <location>
        <begin position="38"/>
        <end position="58"/>
    </location>
</feature>
<feature type="disulfide bond" evidence="4">
    <location>
        <begin position="44"/>
        <end position="61"/>
    </location>
</feature>
<feature type="disulfide bond" evidence="4">
    <location>
        <begin position="69"/>
        <end position="83"/>
    </location>
</feature>
<feature type="disulfide bond" evidence="4">
    <location>
        <begin position="77"/>
        <end position="98"/>
    </location>
</feature>
<feature type="disulfide bond" evidence="5">
    <location>
        <begin position="107"/>
        <end position="143"/>
    </location>
</feature>
<feature type="disulfide bond" evidence="3">
    <location>
        <begin position="168"/>
        <end position="235"/>
    </location>
</feature>
<comment type="function">
    <text evidence="1">IGF-binding proteins prolong the half-life of IGFs and have been shown to either inhibit or stimulate the growth promoting effects of the IGFs in cell culture. They alter the interaction of IGFs with their cell surface receptors (By similarity).</text>
</comment>
<comment type="subcellular location">
    <subcellularLocation>
        <location evidence="1">Secreted</location>
    </subcellularLocation>
</comment>
<name>IBPL1_MOUSE</name>
<organism>
    <name type="scientific">Mus musculus</name>
    <name type="common">Mouse</name>
    <dbReference type="NCBI Taxonomy" id="10090"/>
    <lineage>
        <taxon>Eukaryota</taxon>
        <taxon>Metazoa</taxon>
        <taxon>Chordata</taxon>
        <taxon>Craniata</taxon>
        <taxon>Vertebrata</taxon>
        <taxon>Euteleostomi</taxon>
        <taxon>Mammalia</taxon>
        <taxon>Eutheria</taxon>
        <taxon>Euarchontoglires</taxon>
        <taxon>Glires</taxon>
        <taxon>Rodentia</taxon>
        <taxon>Myomorpha</taxon>
        <taxon>Muroidea</taxon>
        <taxon>Muridae</taxon>
        <taxon>Murinae</taxon>
        <taxon>Mus</taxon>
        <taxon>Mus</taxon>
    </lineage>
</organism>
<sequence>MPRLPLLLLLLPSLARGLGLRDAGRRHPECSPCQQDRCPAPSPCPAPWISARDECGCCARCLGAEGASCGGPVGSRCGPGLVCASRASGTAPEGTGLCVCAQRGAVCGSDGRSYSSICALRLRARHAPRAHHGHLHKARDGPCEFAPVVLMPPRDIHNVTGTQVFLSCEVKAVPTPVITWKKVKHSPEGTEGLEELPGDHVNIAVQVRGGPSDHETTSWILINPLRKEDEGVYHCHAANAIGEAQSHGTVTVLDLNRYKSLYSSVPGDLL</sequence>
<gene>
    <name type="primary">Igfbpl1</name>
    <name type="synonym">Igfbprp4</name>
</gene>
<dbReference type="EMBL" id="AL772381">
    <property type="status" value="NOT_ANNOTATED_CDS"/>
    <property type="molecule type" value="Genomic_DNA"/>
</dbReference>
<dbReference type="EMBL" id="BC051960">
    <property type="protein sequence ID" value="AAH51960.1"/>
    <property type="molecule type" value="mRNA"/>
</dbReference>
<dbReference type="CCDS" id="CCDS38756.1"/>
<dbReference type="RefSeq" id="NP_061211.1">
    <property type="nucleotide sequence ID" value="NM_018741.2"/>
</dbReference>
<dbReference type="SMR" id="Q80W15"/>
<dbReference type="FunCoup" id="Q80W15">
    <property type="interactions" value="86"/>
</dbReference>
<dbReference type="STRING" id="10090.ENSMUSP00000036974"/>
<dbReference type="GlyCosmos" id="Q80W15">
    <property type="glycosylation" value="1 site, No reported glycans"/>
</dbReference>
<dbReference type="GlyGen" id="Q80W15">
    <property type="glycosylation" value="1 site, 1 N-linked glycan (1 site)"/>
</dbReference>
<dbReference type="PhosphoSitePlus" id="Q80W15"/>
<dbReference type="PaxDb" id="10090-ENSMUSP00000036974"/>
<dbReference type="ProteomicsDB" id="267037"/>
<dbReference type="Antibodypedia" id="62957">
    <property type="antibodies" value="53 antibodies from 16 providers"/>
</dbReference>
<dbReference type="Ensembl" id="ENSMUST00000044297.7">
    <property type="protein sequence ID" value="ENSMUSP00000036974.7"/>
    <property type="gene ID" value="ENSMUSG00000035551.7"/>
</dbReference>
<dbReference type="GeneID" id="75426"/>
<dbReference type="KEGG" id="mmu:75426"/>
<dbReference type="UCSC" id="uc008ssy.1">
    <property type="organism name" value="mouse"/>
</dbReference>
<dbReference type="AGR" id="MGI:1933198"/>
<dbReference type="CTD" id="347252"/>
<dbReference type="MGI" id="MGI:1933198">
    <property type="gene designation" value="Igfbpl1"/>
</dbReference>
<dbReference type="VEuPathDB" id="HostDB:ENSMUSG00000035551"/>
<dbReference type="eggNOG" id="ENOG502QSKF">
    <property type="taxonomic scope" value="Eukaryota"/>
</dbReference>
<dbReference type="GeneTree" id="ENSGT00530000063555"/>
<dbReference type="HOGENOM" id="CLU_075590_0_1_1"/>
<dbReference type="InParanoid" id="Q80W15"/>
<dbReference type="OMA" id="PGMVCVS"/>
<dbReference type="OrthoDB" id="10012075at2759"/>
<dbReference type="PhylomeDB" id="Q80W15"/>
<dbReference type="TreeFam" id="TF331645"/>
<dbReference type="BioGRID-ORCS" id="75426">
    <property type="hits" value="2 hits in 77 CRISPR screens"/>
</dbReference>
<dbReference type="ChiTaRS" id="Igfbpl1">
    <property type="organism name" value="mouse"/>
</dbReference>
<dbReference type="PRO" id="PR:Q80W15"/>
<dbReference type="Proteomes" id="UP000000589">
    <property type="component" value="Chromosome 4"/>
</dbReference>
<dbReference type="RNAct" id="Q80W15">
    <property type="molecule type" value="protein"/>
</dbReference>
<dbReference type="Bgee" id="ENSMUSG00000035551">
    <property type="expression patterns" value="Expressed in cortical plate and 71 other cell types or tissues"/>
</dbReference>
<dbReference type="GO" id="GO:0005615">
    <property type="term" value="C:extracellular space"/>
    <property type="evidence" value="ECO:0007669"/>
    <property type="project" value="Ensembl"/>
</dbReference>
<dbReference type="GO" id="GO:0005520">
    <property type="term" value="F:insulin-like growth factor binding"/>
    <property type="evidence" value="ECO:0007669"/>
    <property type="project" value="InterPro"/>
</dbReference>
<dbReference type="GO" id="GO:0071228">
    <property type="term" value="P:cellular response to tumor cell"/>
    <property type="evidence" value="ECO:0007669"/>
    <property type="project" value="Ensembl"/>
</dbReference>
<dbReference type="GO" id="GO:0001558">
    <property type="term" value="P:regulation of cell growth"/>
    <property type="evidence" value="ECO:0007669"/>
    <property type="project" value="InterPro"/>
</dbReference>
<dbReference type="CDD" id="cd00096">
    <property type="entry name" value="Ig"/>
    <property type="match status" value="1"/>
</dbReference>
<dbReference type="CDD" id="cd00104">
    <property type="entry name" value="KAZAL_FS"/>
    <property type="match status" value="1"/>
</dbReference>
<dbReference type="FunFam" id="4.10.40.20:FF:000009">
    <property type="entry name" value="Insulin like growth factor binding protein like 1"/>
    <property type="match status" value="1"/>
</dbReference>
<dbReference type="FunFam" id="2.60.40.10:FF:000763">
    <property type="entry name" value="Insulin-like growth factor binding protein 7"/>
    <property type="match status" value="1"/>
</dbReference>
<dbReference type="Gene3D" id="3.30.60.30">
    <property type="match status" value="1"/>
</dbReference>
<dbReference type="Gene3D" id="4.10.40.20">
    <property type="match status" value="1"/>
</dbReference>
<dbReference type="Gene3D" id="2.60.40.10">
    <property type="entry name" value="Immunoglobulins"/>
    <property type="match status" value="1"/>
</dbReference>
<dbReference type="InterPro" id="IPR009030">
    <property type="entry name" value="Growth_fac_rcpt_cys_sf"/>
</dbReference>
<dbReference type="InterPro" id="IPR007110">
    <property type="entry name" value="Ig-like_dom"/>
</dbReference>
<dbReference type="InterPro" id="IPR036179">
    <property type="entry name" value="Ig-like_dom_sf"/>
</dbReference>
<dbReference type="InterPro" id="IPR013783">
    <property type="entry name" value="Ig-like_fold"/>
</dbReference>
<dbReference type="InterPro" id="IPR013098">
    <property type="entry name" value="Ig_I-set"/>
</dbReference>
<dbReference type="InterPro" id="IPR003599">
    <property type="entry name" value="Ig_sub"/>
</dbReference>
<dbReference type="InterPro" id="IPR003598">
    <property type="entry name" value="Ig_sub2"/>
</dbReference>
<dbReference type="InterPro" id="IPR000867">
    <property type="entry name" value="IGFBP-like"/>
</dbReference>
<dbReference type="InterPro" id="IPR011390">
    <property type="entry name" value="IGFBP_rP_mac25"/>
</dbReference>
<dbReference type="InterPro" id="IPR002350">
    <property type="entry name" value="Kazal_dom"/>
</dbReference>
<dbReference type="InterPro" id="IPR036058">
    <property type="entry name" value="Kazal_dom_sf"/>
</dbReference>
<dbReference type="PANTHER" id="PTHR14186">
    <property type="entry name" value="INSULIN-LIKE GROWTH FACTOR BINDING PROTEIN-RELATED"/>
    <property type="match status" value="1"/>
</dbReference>
<dbReference type="PANTHER" id="PTHR14186:SF16">
    <property type="entry name" value="INSULIN-LIKE GROWTH FACTOR-BINDING PROTEIN-LIKE 1"/>
    <property type="match status" value="1"/>
</dbReference>
<dbReference type="Pfam" id="PF07679">
    <property type="entry name" value="I-set"/>
    <property type="match status" value="1"/>
</dbReference>
<dbReference type="Pfam" id="PF00219">
    <property type="entry name" value="IGFBP"/>
    <property type="match status" value="1"/>
</dbReference>
<dbReference type="Pfam" id="PF07648">
    <property type="entry name" value="Kazal_2"/>
    <property type="match status" value="1"/>
</dbReference>
<dbReference type="PIRSF" id="PIRSF018239">
    <property type="entry name" value="IGFBP_rP_mac25"/>
    <property type="match status" value="1"/>
</dbReference>
<dbReference type="SMART" id="SM00121">
    <property type="entry name" value="IB"/>
    <property type="match status" value="1"/>
</dbReference>
<dbReference type="SMART" id="SM00409">
    <property type="entry name" value="IG"/>
    <property type="match status" value="1"/>
</dbReference>
<dbReference type="SMART" id="SM00408">
    <property type="entry name" value="IGc2"/>
    <property type="match status" value="1"/>
</dbReference>
<dbReference type="SMART" id="SM00280">
    <property type="entry name" value="KAZAL"/>
    <property type="match status" value="1"/>
</dbReference>
<dbReference type="SUPFAM" id="SSF57184">
    <property type="entry name" value="Growth factor receptor domain"/>
    <property type="match status" value="1"/>
</dbReference>
<dbReference type="SUPFAM" id="SSF48726">
    <property type="entry name" value="Immunoglobulin"/>
    <property type="match status" value="1"/>
</dbReference>
<dbReference type="SUPFAM" id="SSF100895">
    <property type="entry name" value="Kazal-type serine protease inhibitors"/>
    <property type="match status" value="1"/>
</dbReference>
<dbReference type="PROSITE" id="PS50835">
    <property type="entry name" value="IG_LIKE"/>
    <property type="match status" value="1"/>
</dbReference>
<dbReference type="PROSITE" id="PS51323">
    <property type="entry name" value="IGFBP_N_2"/>
    <property type="match status" value="1"/>
</dbReference>
<dbReference type="PROSITE" id="PS51465">
    <property type="entry name" value="KAZAL_2"/>
    <property type="match status" value="1"/>
</dbReference>
<proteinExistence type="evidence at transcript level"/>
<accession>Q80W15</accession>